<keyword id="KW-0028">Amino-acid biosynthesis</keyword>
<keyword id="KW-0057">Aromatic amino acid biosynthesis</keyword>
<keyword id="KW-0328">Glycosyltransferase</keyword>
<keyword id="KW-0460">Magnesium</keyword>
<keyword id="KW-0479">Metal-binding</keyword>
<keyword id="KW-0808">Transferase</keyword>
<keyword id="KW-0822">Tryptophan biosynthesis</keyword>
<gene>
    <name evidence="1" type="primary">trpD</name>
    <name type="ordered locus">CCA_00563</name>
</gene>
<sequence length="343" mass="36774">MLQTYLQSIMNQSHLTYDEVESVTNLMLNGADPHQIAAFLAVLKYRGETPTEVAGMISALQKQATPVNLPFPALDIVGTGGDLANTVNISTGSAILAAACGIPIAKHGNRSVSSQSGSADVLEALGIEIEMSPEELLSCVQEVGIGFMFAPIYHPSLKKLAPIRKGMKFPSVFNILGPLLNPANTEYALIGVSNEPILELMSEVCLKFKNTKRTFLFHGSGLDELTTLGKVVGYDIQQGKKTRLEIDPTSLGFNSCKIEDLKGGNSKLNACILKKAFMGQQSAIADALIFNAGAAMWVFGNAATLEEGIHSARKTLMEGEALRVLAQWAAFSQQLKLKRGSCN</sequence>
<comment type="function">
    <text evidence="1">Catalyzes the transfer of the phosphoribosyl group of 5-phosphorylribose-1-pyrophosphate (PRPP) to anthranilate to yield N-(5'-phosphoribosyl)-anthranilate (PRA).</text>
</comment>
<comment type="catalytic activity">
    <reaction evidence="1">
        <text>N-(5-phospho-beta-D-ribosyl)anthranilate + diphosphate = 5-phospho-alpha-D-ribose 1-diphosphate + anthranilate</text>
        <dbReference type="Rhea" id="RHEA:11768"/>
        <dbReference type="ChEBI" id="CHEBI:16567"/>
        <dbReference type="ChEBI" id="CHEBI:18277"/>
        <dbReference type="ChEBI" id="CHEBI:33019"/>
        <dbReference type="ChEBI" id="CHEBI:58017"/>
        <dbReference type="EC" id="2.4.2.18"/>
    </reaction>
</comment>
<comment type="cofactor">
    <cofactor evidence="1">
        <name>Mg(2+)</name>
        <dbReference type="ChEBI" id="CHEBI:18420"/>
    </cofactor>
    <text evidence="1">Binds 2 magnesium ions per monomer.</text>
</comment>
<comment type="pathway">
    <text evidence="1">Amino-acid biosynthesis; L-tryptophan biosynthesis; L-tryptophan from chorismate: step 2/5.</text>
</comment>
<comment type="subunit">
    <text evidence="1">Homodimer.</text>
</comment>
<comment type="similarity">
    <text evidence="1">Belongs to the anthranilate phosphoribosyltransferase family.</text>
</comment>
<name>TRPD_CHLCV</name>
<evidence type="ECO:0000255" key="1">
    <source>
        <dbReference type="HAMAP-Rule" id="MF_00211"/>
    </source>
</evidence>
<dbReference type="EC" id="2.4.2.18" evidence="1"/>
<dbReference type="EMBL" id="AE015925">
    <property type="protein sequence ID" value="AAP05305.1"/>
    <property type="molecule type" value="Genomic_DNA"/>
</dbReference>
<dbReference type="RefSeq" id="WP_011006520.1">
    <property type="nucleotide sequence ID" value="NC_003361.3"/>
</dbReference>
<dbReference type="SMR" id="Q822W6"/>
<dbReference type="STRING" id="227941.CCA_00563"/>
<dbReference type="KEGG" id="cca:CCA_00563"/>
<dbReference type="eggNOG" id="COG0547">
    <property type="taxonomic scope" value="Bacteria"/>
</dbReference>
<dbReference type="HOGENOM" id="CLU_034315_4_0_0"/>
<dbReference type="OrthoDB" id="9806430at2"/>
<dbReference type="UniPathway" id="UPA00035">
    <property type="reaction ID" value="UER00041"/>
</dbReference>
<dbReference type="Proteomes" id="UP000002193">
    <property type="component" value="Chromosome"/>
</dbReference>
<dbReference type="GO" id="GO:0005829">
    <property type="term" value="C:cytosol"/>
    <property type="evidence" value="ECO:0007669"/>
    <property type="project" value="TreeGrafter"/>
</dbReference>
<dbReference type="GO" id="GO:0004048">
    <property type="term" value="F:anthranilate phosphoribosyltransferase activity"/>
    <property type="evidence" value="ECO:0007669"/>
    <property type="project" value="UniProtKB-UniRule"/>
</dbReference>
<dbReference type="GO" id="GO:0000287">
    <property type="term" value="F:magnesium ion binding"/>
    <property type="evidence" value="ECO:0007669"/>
    <property type="project" value="UniProtKB-UniRule"/>
</dbReference>
<dbReference type="GO" id="GO:0000162">
    <property type="term" value="P:L-tryptophan biosynthetic process"/>
    <property type="evidence" value="ECO:0007669"/>
    <property type="project" value="UniProtKB-UniRule"/>
</dbReference>
<dbReference type="FunFam" id="3.40.1030.10:FF:000002">
    <property type="entry name" value="Anthranilate phosphoribosyltransferase"/>
    <property type="match status" value="1"/>
</dbReference>
<dbReference type="Gene3D" id="3.40.1030.10">
    <property type="entry name" value="Nucleoside phosphorylase/phosphoribosyltransferase catalytic domain"/>
    <property type="match status" value="1"/>
</dbReference>
<dbReference type="Gene3D" id="1.20.970.10">
    <property type="entry name" value="Transferase, Pyrimidine Nucleoside Phosphorylase, Chain C"/>
    <property type="match status" value="1"/>
</dbReference>
<dbReference type="HAMAP" id="MF_00211">
    <property type="entry name" value="TrpD"/>
    <property type="match status" value="1"/>
</dbReference>
<dbReference type="InterPro" id="IPR005940">
    <property type="entry name" value="Anthranilate_Pribosyl_Tfrase"/>
</dbReference>
<dbReference type="InterPro" id="IPR000312">
    <property type="entry name" value="Glycosyl_Trfase_fam3"/>
</dbReference>
<dbReference type="InterPro" id="IPR017459">
    <property type="entry name" value="Glycosyl_Trfase_fam3_N_dom"/>
</dbReference>
<dbReference type="InterPro" id="IPR036320">
    <property type="entry name" value="Glycosyl_Trfase_fam3_N_dom_sf"/>
</dbReference>
<dbReference type="InterPro" id="IPR035902">
    <property type="entry name" value="Nuc_phospho_transferase"/>
</dbReference>
<dbReference type="NCBIfam" id="TIGR01245">
    <property type="entry name" value="trpD"/>
    <property type="match status" value="1"/>
</dbReference>
<dbReference type="PANTHER" id="PTHR43285">
    <property type="entry name" value="ANTHRANILATE PHOSPHORIBOSYLTRANSFERASE"/>
    <property type="match status" value="1"/>
</dbReference>
<dbReference type="PANTHER" id="PTHR43285:SF2">
    <property type="entry name" value="ANTHRANILATE PHOSPHORIBOSYLTRANSFERASE"/>
    <property type="match status" value="1"/>
</dbReference>
<dbReference type="Pfam" id="PF02885">
    <property type="entry name" value="Glycos_trans_3N"/>
    <property type="match status" value="1"/>
</dbReference>
<dbReference type="Pfam" id="PF00591">
    <property type="entry name" value="Glycos_transf_3"/>
    <property type="match status" value="1"/>
</dbReference>
<dbReference type="SUPFAM" id="SSF52418">
    <property type="entry name" value="Nucleoside phosphorylase/phosphoribosyltransferase catalytic domain"/>
    <property type="match status" value="1"/>
</dbReference>
<dbReference type="SUPFAM" id="SSF47648">
    <property type="entry name" value="Nucleoside phosphorylase/phosphoribosyltransferase N-terminal domain"/>
    <property type="match status" value="1"/>
</dbReference>
<accession>Q822W6</accession>
<protein>
    <recommendedName>
        <fullName evidence="1">Anthranilate phosphoribosyltransferase</fullName>
        <ecNumber evidence="1">2.4.2.18</ecNumber>
    </recommendedName>
</protein>
<reference key="1">
    <citation type="journal article" date="2003" name="Nucleic Acids Res.">
        <title>Genome sequence of Chlamydophila caviae (Chlamydia psittaci GPIC): examining the role of niche-specific genes in the evolution of the Chlamydiaceae.</title>
        <authorList>
            <person name="Read T.D."/>
            <person name="Myers G.S.A."/>
            <person name="Brunham R.C."/>
            <person name="Nelson W.C."/>
            <person name="Paulsen I.T."/>
            <person name="Heidelberg J.F."/>
            <person name="Holtzapple E.K."/>
            <person name="Khouri H.M."/>
            <person name="Federova N.B."/>
            <person name="Carty H.A."/>
            <person name="Umayam L.A."/>
            <person name="Haft D.H."/>
            <person name="Peterson J.D."/>
            <person name="Beanan M.J."/>
            <person name="White O."/>
            <person name="Salzberg S.L."/>
            <person name="Hsia R.-C."/>
            <person name="McClarty G."/>
            <person name="Rank R.G."/>
            <person name="Bavoil P.M."/>
            <person name="Fraser C.M."/>
        </authorList>
    </citation>
    <scope>NUCLEOTIDE SEQUENCE [LARGE SCALE GENOMIC DNA]</scope>
    <source>
        <strain>ATCC VR-813 / DSM 19441 / 03DC25 / GPIC</strain>
    </source>
</reference>
<proteinExistence type="inferred from homology"/>
<feature type="chain" id="PRO_0000154442" description="Anthranilate phosphoribosyltransferase">
    <location>
        <begin position="1"/>
        <end position="343"/>
    </location>
</feature>
<feature type="binding site" evidence="1">
    <location>
        <position position="78"/>
    </location>
    <ligand>
        <name>5-phospho-alpha-D-ribose 1-diphosphate</name>
        <dbReference type="ChEBI" id="CHEBI:58017"/>
    </ligand>
</feature>
<feature type="binding site" evidence="1">
    <location>
        <position position="78"/>
    </location>
    <ligand>
        <name>anthranilate</name>
        <dbReference type="ChEBI" id="CHEBI:16567"/>
        <label>1</label>
    </ligand>
</feature>
<feature type="binding site" evidence="1">
    <location>
        <begin position="81"/>
        <end position="82"/>
    </location>
    <ligand>
        <name>5-phospho-alpha-D-ribose 1-diphosphate</name>
        <dbReference type="ChEBI" id="CHEBI:58017"/>
    </ligand>
</feature>
<feature type="binding site" evidence="1">
    <location>
        <position position="86"/>
    </location>
    <ligand>
        <name>5-phospho-alpha-D-ribose 1-diphosphate</name>
        <dbReference type="ChEBI" id="CHEBI:58017"/>
    </ligand>
</feature>
<feature type="binding site" evidence="1">
    <location>
        <begin position="88"/>
        <end position="91"/>
    </location>
    <ligand>
        <name>5-phospho-alpha-D-ribose 1-diphosphate</name>
        <dbReference type="ChEBI" id="CHEBI:58017"/>
    </ligand>
</feature>
<feature type="binding site" evidence="1">
    <location>
        <position position="90"/>
    </location>
    <ligand>
        <name>Mg(2+)</name>
        <dbReference type="ChEBI" id="CHEBI:18420"/>
        <label>1</label>
    </ligand>
</feature>
<feature type="binding site" evidence="1">
    <location>
        <begin position="106"/>
        <end position="114"/>
    </location>
    <ligand>
        <name>5-phospho-alpha-D-ribose 1-diphosphate</name>
        <dbReference type="ChEBI" id="CHEBI:58017"/>
    </ligand>
</feature>
<feature type="binding site" evidence="1">
    <location>
        <position position="109"/>
    </location>
    <ligand>
        <name>anthranilate</name>
        <dbReference type="ChEBI" id="CHEBI:16567"/>
        <label>1</label>
    </ligand>
</feature>
<feature type="binding site" evidence="1">
    <location>
        <position position="118"/>
    </location>
    <ligand>
        <name>5-phospho-alpha-D-ribose 1-diphosphate</name>
        <dbReference type="ChEBI" id="CHEBI:58017"/>
    </ligand>
</feature>
<feature type="binding site" evidence="1">
    <location>
        <position position="164"/>
    </location>
    <ligand>
        <name>anthranilate</name>
        <dbReference type="ChEBI" id="CHEBI:16567"/>
        <label>2</label>
    </ligand>
</feature>
<feature type="binding site" evidence="1">
    <location>
        <position position="223"/>
    </location>
    <ligand>
        <name>Mg(2+)</name>
        <dbReference type="ChEBI" id="CHEBI:18420"/>
        <label>2</label>
    </ligand>
</feature>
<feature type="binding site" evidence="1">
    <location>
        <position position="224"/>
    </location>
    <ligand>
        <name>Mg(2+)</name>
        <dbReference type="ChEBI" id="CHEBI:18420"/>
        <label>1</label>
    </ligand>
</feature>
<feature type="binding site" evidence="1">
    <location>
        <position position="224"/>
    </location>
    <ligand>
        <name>Mg(2+)</name>
        <dbReference type="ChEBI" id="CHEBI:18420"/>
        <label>2</label>
    </ligand>
</feature>
<organism>
    <name type="scientific">Chlamydia caviae (strain ATCC VR-813 / DSM 19441 / 03DC25 / GPIC)</name>
    <name type="common">Chlamydophila caviae</name>
    <dbReference type="NCBI Taxonomy" id="227941"/>
    <lineage>
        <taxon>Bacteria</taxon>
        <taxon>Pseudomonadati</taxon>
        <taxon>Chlamydiota</taxon>
        <taxon>Chlamydiia</taxon>
        <taxon>Chlamydiales</taxon>
        <taxon>Chlamydiaceae</taxon>
        <taxon>Chlamydia/Chlamydophila group</taxon>
        <taxon>Chlamydia</taxon>
    </lineage>
</organism>